<evidence type="ECO:0000250" key="1">
    <source>
        <dbReference type="UniProtKB" id="P40406"/>
    </source>
</evidence>
<evidence type="ECO:0000255" key="2">
    <source>
        <dbReference type="PROSITE-ProRule" id="PRU00303"/>
    </source>
</evidence>
<evidence type="ECO:0000269" key="3">
    <source>
    </source>
</evidence>
<evidence type="ECO:0000303" key="4">
    <source>
    </source>
</evidence>
<evidence type="ECO:0000305" key="5"/>
<evidence type="ECO:0000305" key="6">
    <source>
    </source>
</evidence>
<evidence type="ECO:0000312" key="7">
    <source>
        <dbReference type="EMBL" id="CCP42966.1"/>
    </source>
</evidence>
<evidence type="ECO:0007829" key="8">
    <source>
        <dbReference type="PDB" id="6GFV"/>
    </source>
</evidence>
<comment type="function">
    <text evidence="3">Plays a role in peptidoglycan recycling by cleaving the terminal beta-1,4-linked N-acetylglucosamine (GlcNAc) from peptidoglycan fragments. Acts as a regulator for GlcNAc-MurNAc levels by cleaving disaccharides and allowing the breakdown of MurNAc.</text>
</comment>
<comment type="catalytic activity">
    <reaction evidence="3">
        <text>Hydrolysis of terminal non-reducing N-acetyl-D-hexosamine residues in N-acetyl-beta-D-hexosaminides.</text>
        <dbReference type="EC" id="3.2.1.52"/>
    </reaction>
</comment>
<comment type="biophysicochemical properties">
    <kinetics>
        <KM evidence="3">72 uM for 4MU-GlcNAc</KM>
        <text evidence="3">kcat is 0.02 sec(-1) with 4MU-GlcNAc as substrate.</text>
    </kinetics>
</comment>
<comment type="pathway">
    <text evidence="3">Cell wall biogenesis; peptidoglycan recycling.</text>
</comment>
<comment type="subcellular location">
    <subcellularLocation>
        <location evidence="6">Cell inner membrane</location>
        <topology evidence="2">Lipid-anchor</topology>
        <orientation evidence="6">Periplasmic side</orientation>
    </subcellularLocation>
</comment>
<comment type="similarity">
    <text evidence="5">Belongs to the glycosyl hydrolase 3 family.</text>
</comment>
<feature type="signal peptide" evidence="2">
    <location>
        <begin position="1"/>
        <end position="19"/>
    </location>
</feature>
<feature type="chain" id="PRO_5010230425" description="Beta-hexosaminidase LpqI" evidence="2">
    <location>
        <begin position="20"/>
        <end position="388"/>
    </location>
</feature>
<feature type="active site" description="Proton donor/acceptor" evidence="1">
    <location>
        <position position="236"/>
    </location>
</feature>
<feature type="active site" description="Nucleophile" evidence="1">
    <location>
        <position position="311"/>
    </location>
</feature>
<feature type="binding site" evidence="1">
    <location>
        <position position="123"/>
    </location>
    <ligand>
        <name>substrate</name>
    </ligand>
</feature>
<feature type="binding site" evidence="1">
    <location>
        <position position="131"/>
    </location>
    <ligand>
        <name>substrate</name>
    </ligand>
</feature>
<feature type="binding site" evidence="1">
    <location>
        <position position="193"/>
    </location>
    <ligand>
        <name>substrate</name>
    </ligand>
</feature>
<feature type="binding site" evidence="1">
    <location>
        <begin position="223"/>
        <end position="224"/>
    </location>
    <ligand>
        <name>substrate</name>
    </ligand>
</feature>
<feature type="site" description="Important for catalytic activity" evidence="1">
    <location>
        <position position="234"/>
    </location>
</feature>
<feature type="lipid moiety-binding region" description="N-palmitoyl cysteine" evidence="2">
    <location>
        <position position="20"/>
    </location>
</feature>
<feature type="lipid moiety-binding region" description="S-diacylglycerol cysteine" evidence="2">
    <location>
        <position position="20"/>
    </location>
</feature>
<feature type="helix" evidence="8">
    <location>
        <begin position="52"/>
        <end position="58"/>
    </location>
</feature>
<feature type="helix" evidence="8">
    <location>
        <begin position="61"/>
        <end position="66"/>
    </location>
</feature>
<feature type="strand" evidence="8">
    <location>
        <begin position="69"/>
        <end position="72"/>
    </location>
</feature>
<feature type="helix" evidence="8">
    <location>
        <begin position="76"/>
        <end position="86"/>
    </location>
</feature>
<feature type="strand" evidence="8">
    <location>
        <begin position="89"/>
        <end position="93"/>
    </location>
</feature>
<feature type="helix" evidence="8">
    <location>
        <begin position="99"/>
        <end position="103"/>
    </location>
</feature>
<feature type="helix" evidence="8">
    <location>
        <begin position="105"/>
        <end position="112"/>
    </location>
</feature>
<feature type="strand" evidence="8">
    <location>
        <begin position="119"/>
        <end position="122"/>
    </location>
</feature>
<feature type="strand" evidence="8">
    <location>
        <begin position="124"/>
        <end position="126"/>
    </location>
</feature>
<feature type="turn" evidence="8">
    <location>
        <begin position="131"/>
        <end position="137"/>
    </location>
</feature>
<feature type="helix" evidence="8">
    <location>
        <begin position="143"/>
        <end position="149"/>
    </location>
</feature>
<feature type="helix" evidence="8">
    <location>
        <begin position="152"/>
        <end position="169"/>
    </location>
</feature>
<feature type="strand" evidence="8">
    <location>
        <begin position="188"/>
        <end position="190"/>
    </location>
</feature>
<feature type="helix" evidence="8">
    <location>
        <begin position="191"/>
        <end position="193"/>
    </location>
</feature>
<feature type="helix" evidence="8">
    <location>
        <begin position="199"/>
        <end position="215"/>
    </location>
</feature>
<feature type="strand" evidence="8">
    <location>
        <begin position="219"/>
        <end position="225"/>
    </location>
</feature>
<feature type="turn" evidence="8">
    <location>
        <begin position="235"/>
        <end position="237"/>
    </location>
</feature>
<feature type="helix" evidence="8">
    <location>
        <begin position="245"/>
        <end position="249"/>
    </location>
</feature>
<feature type="turn" evidence="8">
    <location>
        <begin position="250"/>
        <end position="253"/>
    </location>
</feature>
<feature type="helix" evidence="8">
    <location>
        <begin position="254"/>
        <end position="259"/>
    </location>
</feature>
<feature type="strand" evidence="8">
    <location>
        <begin position="262"/>
        <end position="264"/>
    </location>
</feature>
<feature type="strand" evidence="8">
    <location>
        <begin position="266"/>
        <end position="269"/>
    </location>
</feature>
<feature type="strand" evidence="8">
    <location>
        <begin position="271"/>
        <end position="273"/>
    </location>
</feature>
<feature type="turn" evidence="8">
    <location>
        <begin position="275"/>
        <end position="277"/>
    </location>
</feature>
<feature type="helix" evidence="8">
    <location>
        <begin position="283"/>
        <end position="285"/>
    </location>
</feature>
<feature type="helix" evidence="8">
    <location>
        <begin position="287"/>
        <end position="295"/>
    </location>
</feature>
<feature type="helix" evidence="8">
    <location>
        <begin position="297"/>
        <end position="299"/>
    </location>
</feature>
<feature type="strand" evidence="8">
    <location>
        <begin position="308"/>
        <end position="310"/>
    </location>
</feature>
<feature type="strand" evidence="8">
    <location>
        <begin position="313"/>
        <end position="315"/>
    </location>
</feature>
<feature type="helix" evidence="8">
    <location>
        <begin position="317"/>
        <end position="320"/>
    </location>
</feature>
<feature type="helix" evidence="8">
    <location>
        <begin position="325"/>
        <end position="335"/>
    </location>
</feature>
<feature type="strand" evidence="8">
    <location>
        <begin position="338"/>
        <end position="343"/>
    </location>
</feature>
<feature type="helix" evidence="8">
    <location>
        <begin position="348"/>
        <end position="360"/>
    </location>
</feature>
<feature type="helix" evidence="8">
    <location>
        <begin position="366"/>
        <end position="380"/>
    </location>
</feature>
<name>LPQI_MYCTU</name>
<gene>
    <name evidence="4" type="primary">lpqI</name>
    <name evidence="7" type="ordered locus">Rv0237</name>
</gene>
<protein>
    <recommendedName>
        <fullName evidence="5">Beta-hexosaminidase LpqI</fullName>
        <ecNumber evidence="3">3.2.1.52</ecNumber>
    </recommendedName>
    <alternativeName>
        <fullName evidence="4">Beta-N-acetylglucosaminidase</fullName>
    </alternativeName>
    <alternativeName>
        <fullName evidence="5">Beta-N-acetylhexosaminidase</fullName>
    </alternativeName>
</protein>
<organism>
    <name type="scientific">Mycobacterium tuberculosis (strain ATCC 25618 / H37Rv)</name>
    <dbReference type="NCBI Taxonomy" id="83332"/>
    <lineage>
        <taxon>Bacteria</taxon>
        <taxon>Bacillati</taxon>
        <taxon>Actinomycetota</taxon>
        <taxon>Actinomycetes</taxon>
        <taxon>Mycobacteriales</taxon>
        <taxon>Mycobacteriaceae</taxon>
        <taxon>Mycobacterium</taxon>
        <taxon>Mycobacterium tuberculosis complex</taxon>
    </lineage>
</organism>
<dbReference type="EC" id="3.2.1.52" evidence="3"/>
<dbReference type="EMBL" id="AL123456">
    <property type="protein sequence ID" value="CCP42966.1"/>
    <property type="molecule type" value="Genomic_DNA"/>
</dbReference>
<dbReference type="RefSeq" id="WP_003401295.1">
    <property type="nucleotide sequence ID" value="NZ_NVQJ01000001.1"/>
</dbReference>
<dbReference type="RefSeq" id="YP_177702.1">
    <property type="nucleotide sequence ID" value="NC_000962.3"/>
</dbReference>
<dbReference type="PDB" id="6GFV">
    <property type="method" value="X-ray"/>
    <property type="resolution" value="1.96 A"/>
    <property type="chains" value="A/B=44-386"/>
</dbReference>
<dbReference type="PDBsum" id="6GFV"/>
<dbReference type="SMR" id="L7N6B0"/>
<dbReference type="FunCoup" id="L7N6B0">
    <property type="interactions" value="30"/>
</dbReference>
<dbReference type="STRING" id="83332.Rv0237"/>
<dbReference type="PaxDb" id="83332-Rv0237"/>
<dbReference type="GeneID" id="886693"/>
<dbReference type="KEGG" id="mtu:Rv0237"/>
<dbReference type="KEGG" id="mtv:RVBD_0237"/>
<dbReference type="PATRIC" id="fig|83332.111.peg.270"/>
<dbReference type="TubercuList" id="Rv0237"/>
<dbReference type="eggNOG" id="COG1472">
    <property type="taxonomic scope" value="Bacteria"/>
</dbReference>
<dbReference type="InParanoid" id="L7N6B0"/>
<dbReference type="OrthoDB" id="9805821at2"/>
<dbReference type="PhylomeDB" id="L7N6B0"/>
<dbReference type="SABIO-RK" id="L7N6B0"/>
<dbReference type="UniPathway" id="UPA00544"/>
<dbReference type="Proteomes" id="UP000001584">
    <property type="component" value="Chromosome"/>
</dbReference>
<dbReference type="GO" id="GO:0005829">
    <property type="term" value="C:cytosol"/>
    <property type="evidence" value="ECO:0000318"/>
    <property type="project" value="GO_Central"/>
</dbReference>
<dbReference type="GO" id="GO:0005886">
    <property type="term" value="C:plasma membrane"/>
    <property type="evidence" value="ECO:0007669"/>
    <property type="project" value="UniProtKB-SubCell"/>
</dbReference>
<dbReference type="GO" id="GO:0016231">
    <property type="term" value="F:beta-N-acetylglucosaminidase activity"/>
    <property type="evidence" value="ECO:0000318"/>
    <property type="project" value="GO_Central"/>
</dbReference>
<dbReference type="GO" id="GO:0005975">
    <property type="term" value="P:carbohydrate metabolic process"/>
    <property type="evidence" value="ECO:0007669"/>
    <property type="project" value="InterPro"/>
</dbReference>
<dbReference type="GO" id="GO:0071555">
    <property type="term" value="P:cell wall organization"/>
    <property type="evidence" value="ECO:0007669"/>
    <property type="project" value="UniProtKB-KW"/>
</dbReference>
<dbReference type="GO" id="GO:0009254">
    <property type="term" value="P:peptidoglycan turnover"/>
    <property type="evidence" value="ECO:0000318"/>
    <property type="project" value="GO_Central"/>
</dbReference>
<dbReference type="Gene3D" id="3.20.20.300">
    <property type="entry name" value="Glycoside hydrolase, family 3, N-terminal domain"/>
    <property type="match status" value="1"/>
</dbReference>
<dbReference type="InterPro" id="IPR001764">
    <property type="entry name" value="Glyco_hydro_3_N"/>
</dbReference>
<dbReference type="InterPro" id="IPR036962">
    <property type="entry name" value="Glyco_hydro_3_N_sf"/>
</dbReference>
<dbReference type="InterPro" id="IPR017853">
    <property type="entry name" value="Glycoside_hydrolase_SF"/>
</dbReference>
<dbReference type="InterPro" id="IPR050226">
    <property type="entry name" value="NagZ_Beta-hexosaminidase"/>
</dbReference>
<dbReference type="PANTHER" id="PTHR30480:SF13">
    <property type="entry name" value="BETA-HEXOSAMINIDASE"/>
    <property type="match status" value="1"/>
</dbReference>
<dbReference type="PANTHER" id="PTHR30480">
    <property type="entry name" value="BETA-HEXOSAMINIDASE-RELATED"/>
    <property type="match status" value="1"/>
</dbReference>
<dbReference type="Pfam" id="PF00933">
    <property type="entry name" value="Glyco_hydro_3"/>
    <property type="match status" value="1"/>
</dbReference>
<dbReference type="SUPFAM" id="SSF51445">
    <property type="entry name" value="(Trans)glycosidases"/>
    <property type="match status" value="1"/>
</dbReference>
<dbReference type="PROSITE" id="PS51257">
    <property type="entry name" value="PROKAR_LIPOPROTEIN"/>
    <property type="match status" value="1"/>
</dbReference>
<keyword id="KW-0002">3D-structure</keyword>
<keyword id="KW-0997">Cell inner membrane</keyword>
<keyword id="KW-1003">Cell membrane</keyword>
<keyword id="KW-0961">Cell wall biogenesis/degradation</keyword>
<keyword id="KW-0326">Glycosidase</keyword>
<keyword id="KW-0378">Hydrolase</keyword>
<keyword id="KW-0449">Lipoprotein</keyword>
<keyword id="KW-0472">Membrane</keyword>
<keyword id="KW-0564">Palmitate</keyword>
<keyword id="KW-1185">Reference proteome</keyword>
<keyword id="KW-0732">Signal</keyword>
<proteinExistence type="evidence at protein level"/>
<reference key="1">
    <citation type="journal article" date="1998" name="Nature">
        <title>Deciphering the biology of Mycobacterium tuberculosis from the complete genome sequence.</title>
        <authorList>
            <person name="Cole S.T."/>
            <person name="Brosch R."/>
            <person name="Parkhill J."/>
            <person name="Garnier T."/>
            <person name="Churcher C.M."/>
            <person name="Harris D.E."/>
            <person name="Gordon S.V."/>
            <person name="Eiglmeier K."/>
            <person name="Gas S."/>
            <person name="Barry C.E. III"/>
            <person name="Tekaia F."/>
            <person name="Badcock K."/>
            <person name="Basham D."/>
            <person name="Brown D."/>
            <person name="Chillingworth T."/>
            <person name="Connor R."/>
            <person name="Davies R.M."/>
            <person name="Devlin K."/>
            <person name="Feltwell T."/>
            <person name="Gentles S."/>
            <person name="Hamlin N."/>
            <person name="Holroyd S."/>
            <person name="Hornsby T."/>
            <person name="Jagels K."/>
            <person name="Krogh A."/>
            <person name="McLean J."/>
            <person name="Moule S."/>
            <person name="Murphy L.D."/>
            <person name="Oliver S."/>
            <person name="Osborne J."/>
            <person name="Quail M.A."/>
            <person name="Rajandream M.A."/>
            <person name="Rogers J."/>
            <person name="Rutter S."/>
            <person name="Seeger K."/>
            <person name="Skelton S."/>
            <person name="Squares S."/>
            <person name="Squares R."/>
            <person name="Sulston J.E."/>
            <person name="Taylor K."/>
            <person name="Whitehead S."/>
            <person name="Barrell B.G."/>
        </authorList>
    </citation>
    <scope>NUCLEOTIDE SEQUENCE [LARGE SCALE GENOMIC DNA]</scope>
    <source>
        <strain>ATCC 25618 / H37Rv</strain>
    </source>
</reference>
<reference key="2">
    <citation type="journal article" date="2011" name="Mol. Cell. Proteomics">
        <title>Proteogenomic analysis of Mycobacterium tuberculosis by high resolution mass spectrometry.</title>
        <authorList>
            <person name="Kelkar D.S."/>
            <person name="Kumar D."/>
            <person name="Kumar P."/>
            <person name="Balakrishnan L."/>
            <person name="Muthusamy B."/>
            <person name="Yadav A.K."/>
            <person name="Shrivastava P."/>
            <person name="Marimuthu A."/>
            <person name="Anand S."/>
            <person name="Sundaram H."/>
            <person name="Kingsbury R."/>
            <person name="Harsha H.C."/>
            <person name="Nair B."/>
            <person name="Prasad T.S."/>
            <person name="Chauhan D.S."/>
            <person name="Katoch K."/>
            <person name="Katoch V.M."/>
            <person name="Kumar P."/>
            <person name="Chaerkady R."/>
            <person name="Ramachandran S."/>
            <person name="Dash D."/>
            <person name="Pandey A."/>
        </authorList>
    </citation>
    <scope>IDENTIFICATION BY MASS SPECTROMETRY [LARGE SCALE ANALYSIS]</scope>
</reference>
<reference key="3">
    <citation type="journal article" date="2019" name="Nat. Commun.">
        <title>The hydrolase LpqI primes mycobacterial peptidoglycan recycling.</title>
        <authorList>
            <person name="Moynihan P.J."/>
            <person name="Cadby I.T."/>
            <person name="Veerapen N."/>
            <person name="Jankute M."/>
            <person name="Crosatti M."/>
            <person name="Mukamolova G.V."/>
            <person name="Lovering A.L."/>
            <person name="Besra G.S."/>
        </authorList>
    </citation>
    <scope>X-RAY CRYSTALLOGRAPHY (1.96 ANGSTROMS) OF 44-386</scope>
    <scope>FUNCTION</scope>
    <scope>CATALYTIC ACTIVITY</scope>
    <scope>BIOPHYSICOCHEMICAL PROPERTIES</scope>
    <scope>PATHWAY</scope>
    <scope>SUBCELLULAR LOCATION</scope>
</reference>
<sequence>MAFPRTLAILAAAAALVVACSHGGTPTGSSTTSGASPATPVAVPVPRSCAEPAGIPALLSPRDKLAQLLVVGVRDAADAQAVVTNYHVGGILIGSDTDLTIFDGALAEIVAGGGPLPLAVSVDEEGGRVSRLRSLIGGTGPSARELAQTRTVQQVRDLARDRGRQMRKLGITIDFAPVVDVTDAPDDTVIGDRSFGSDPATVTAYAGAYAQGLRDAGVLPVLKHFPGHGRGSGDSHNGGVTTPPLDDLVGDDLVPYRTLVTQAPVGVMVGHLQVPGLTGSEPASLSKAAVNLLRTGTGYGAPPFDGPVFSDDLSGMAAISDRFGVSEAVLRTLQAGADIALWVTTKEVPAVLDRLEQALRAGELPMSAVDRSVVRVATMKGPNPGCGR</sequence>
<accession>L7N6B0</accession>
<accession>I6Y775</accession>